<evidence type="ECO:0000255" key="1">
    <source>
        <dbReference type="HAMAP-Rule" id="MF_01309"/>
    </source>
</evidence>
<evidence type="ECO:0000305" key="2"/>
<reference key="1">
    <citation type="journal article" date="2008" name="J. Bacteriol.">
        <title>Complete genome sequence of Leuconostoc citreum KM20.</title>
        <authorList>
            <person name="Kim J.F."/>
            <person name="Jeong H."/>
            <person name="Lee J.-S."/>
            <person name="Choi S.-H."/>
            <person name="Ha M."/>
            <person name="Hur C.-G."/>
            <person name="Kim J.-S."/>
            <person name="Lee S."/>
            <person name="Park H.-S."/>
            <person name="Park Y.-H."/>
            <person name="Oh T.K."/>
        </authorList>
    </citation>
    <scope>NUCLEOTIDE SEQUENCE [LARGE SCALE GENOMIC DNA]</scope>
    <source>
        <strain>KM20</strain>
    </source>
</reference>
<name>RS3_LEUCK</name>
<dbReference type="EMBL" id="DQ489736">
    <property type="protein sequence ID" value="ACA83412.1"/>
    <property type="molecule type" value="Genomic_DNA"/>
</dbReference>
<dbReference type="RefSeq" id="WP_004899455.1">
    <property type="nucleotide sequence ID" value="NC_010471.1"/>
</dbReference>
<dbReference type="SMR" id="B1MW08"/>
<dbReference type="STRING" id="349519.LCK_01589"/>
<dbReference type="GeneID" id="61103247"/>
<dbReference type="KEGG" id="lci:LCK_01589"/>
<dbReference type="eggNOG" id="COG0092">
    <property type="taxonomic scope" value="Bacteria"/>
</dbReference>
<dbReference type="HOGENOM" id="CLU_058591_0_2_9"/>
<dbReference type="OrthoDB" id="9806396at2"/>
<dbReference type="Proteomes" id="UP000002166">
    <property type="component" value="Chromosome"/>
</dbReference>
<dbReference type="GO" id="GO:0022627">
    <property type="term" value="C:cytosolic small ribosomal subunit"/>
    <property type="evidence" value="ECO:0007669"/>
    <property type="project" value="TreeGrafter"/>
</dbReference>
<dbReference type="GO" id="GO:0003729">
    <property type="term" value="F:mRNA binding"/>
    <property type="evidence" value="ECO:0007669"/>
    <property type="project" value="UniProtKB-UniRule"/>
</dbReference>
<dbReference type="GO" id="GO:0019843">
    <property type="term" value="F:rRNA binding"/>
    <property type="evidence" value="ECO:0007669"/>
    <property type="project" value="UniProtKB-UniRule"/>
</dbReference>
<dbReference type="GO" id="GO:0003735">
    <property type="term" value="F:structural constituent of ribosome"/>
    <property type="evidence" value="ECO:0007669"/>
    <property type="project" value="InterPro"/>
</dbReference>
<dbReference type="GO" id="GO:0006412">
    <property type="term" value="P:translation"/>
    <property type="evidence" value="ECO:0007669"/>
    <property type="project" value="UniProtKB-UniRule"/>
</dbReference>
<dbReference type="CDD" id="cd02412">
    <property type="entry name" value="KH-II_30S_S3"/>
    <property type="match status" value="1"/>
</dbReference>
<dbReference type="FunFam" id="3.30.300.20:FF:000001">
    <property type="entry name" value="30S ribosomal protein S3"/>
    <property type="match status" value="1"/>
</dbReference>
<dbReference type="Gene3D" id="3.30.300.20">
    <property type="match status" value="1"/>
</dbReference>
<dbReference type="Gene3D" id="3.30.1140.32">
    <property type="entry name" value="Ribosomal protein S3, C-terminal domain"/>
    <property type="match status" value="1"/>
</dbReference>
<dbReference type="HAMAP" id="MF_01309_B">
    <property type="entry name" value="Ribosomal_uS3_B"/>
    <property type="match status" value="1"/>
</dbReference>
<dbReference type="InterPro" id="IPR004087">
    <property type="entry name" value="KH_dom"/>
</dbReference>
<dbReference type="InterPro" id="IPR015946">
    <property type="entry name" value="KH_dom-like_a/b"/>
</dbReference>
<dbReference type="InterPro" id="IPR004044">
    <property type="entry name" value="KH_dom_type_2"/>
</dbReference>
<dbReference type="InterPro" id="IPR009019">
    <property type="entry name" value="KH_sf_prok-type"/>
</dbReference>
<dbReference type="InterPro" id="IPR036419">
    <property type="entry name" value="Ribosomal_S3_C_sf"/>
</dbReference>
<dbReference type="InterPro" id="IPR005704">
    <property type="entry name" value="Ribosomal_uS3_bac-typ"/>
</dbReference>
<dbReference type="InterPro" id="IPR001351">
    <property type="entry name" value="Ribosomal_uS3_C"/>
</dbReference>
<dbReference type="InterPro" id="IPR018280">
    <property type="entry name" value="Ribosomal_uS3_CS"/>
</dbReference>
<dbReference type="NCBIfam" id="TIGR01009">
    <property type="entry name" value="rpsC_bact"/>
    <property type="match status" value="1"/>
</dbReference>
<dbReference type="PANTHER" id="PTHR11760">
    <property type="entry name" value="30S/40S RIBOSOMAL PROTEIN S3"/>
    <property type="match status" value="1"/>
</dbReference>
<dbReference type="PANTHER" id="PTHR11760:SF19">
    <property type="entry name" value="SMALL RIBOSOMAL SUBUNIT PROTEIN US3C"/>
    <property type="match status" value="1"/>
</dbReference>
<dbReference type="Pfam" id="PF07650">
    <property type="entry name" value="KH_2"/>
    <property type="match status" value="1"/>
</dbReference>
<dbReference type="Pfam" id="PF00189">
    <property type="entry name" value="Ribosomal_S3_C"/>
    <property type="match status" value="1"/>
</dbReference>
<dbReference type="SMART" id="SM00322">
    <property type="entry name" value="KH"/>
    <property type="match status" value="1"/>
</dbReference>
<dbReference type="SUPFAM" id="SSF54814">
    <property type="entry name" value="Prokaryotic type KH domain (KH-domain type II)"/>
    <property type="match status" value="1"/>
</dbReference>
<dbReference type="SUPFAM" id="SSF54821">
    <property type="entry name" value="Ribosomal protein S3 C-terminal domain"/>
    <property type="match status" value="1"/>
</dbReference>
<dbReference type="PROSITE" id="PS50823">
    <property type="entry name" value="KH_TYPE_2"/>
    <property type="match status" value="1"/>
</dbReference>
<dbReference type="PROSITE" id="PS00548">
    <property type="entry name" value="RIBOSOMAL_S3"/>
    <property type="match status" value="1"/>
</dbReference>
<keyword id="KW-1185">Reference proteome</keyword>
<keyword id="KW-0687">Ribonucleoprotein</keyword>
<keyword id="KW-0689">Ribosomal protein</keyword>
<keyword id="KW-0694">RNA-binding</keyword>
<keyword id="KW-0699">rRNA-binding</keyword>
<gene>
    <name evidence="1" type="primary">rpsC</name>
    <name type="ordered locus">LCK_01589</name>
</gene>
<protein>
    <recommendedName>
        <fullName evidence="1">Small ribosomal subunit protein uS3</fullName>
    </recommendedName>
    <alternativeName>
        <fullName evidence="2">30S ribosomal protein S3</fullName>
    </alternativeName>
</protein>
<sequence>MGQKINPTGFRVGVIRDWDAKWFADKADYANQLHEDLRIRKYIEKNLADAAVDRIEIERSTKSRVDVSVHTAKPGMVIGKGGSEVEKLRTQLAKLTDRDEKGRSKRVFINIVEIKKPDLSAHLVGQQIAGDLERRVAFRRAMRGAIQRATRSGAKGIKVMVSGRLNGADIARIEQYTEGTVPLHTLRADIDYSWDEAMTAYGNLGIKTWIYRGDILPQKKNSK</sequence>
<accession>B1MW08</accession>
<organism>
    <name type="scientific">Leuconostoc citreum (strain KM20)</name>
    <dbReference type="NCBI Taxonomy" id="349519"/>
    <lineage>
        <taxon>Bacteria</taxon>
        <taxon>Bacillati</taxon>
        <taxon>Bacillota</taxon>
        <taxon>Bacilli</taxon>
        <taxon>Lactobacillales</taxon>
        <taxon>Lactobacillaceae</taxon>
        <taxon>Leuconostoc</taxon>
    </lineage>
</organism>
<comment type="function">
    <text evidence="1">Binds the lower part of the 30S subunit head. Binds mRNA in the 70S ribosome, positioning it for translation.</text>
</comment>
<comment type="subunit">
    <text evidence="1">Part of the 30S ribosomal subunit. Forms a tight complex with proteins S10 and S14.</text>
</comment>
<comment type="similarity">
    <text evidence="1">Belongs to the universal ribosomal protein uS3 family.</text>
</comment>
<proteinExistence type="inferred from homology"/>
<feature type="chain" id="PRO_1000140985" description="Small ribosomal subunit protein uS3">
    <location>
        <begin position="1"/>
        <end position="223"/>
    </location>
</feature>
<feature type="domain" description="KH type-2" evidence="1">
    <location>
        <begin position="39"/>
        <end position="115"/>
    </location>
</feature>